<gene>
    <name evidence="1" type="primary">aroE</name>
    <name type="ordered locus">CYA_2729</name>
</gene>
<proteinExistence type="inferred from homology"/>
<sequence length="291" mass="30568">MDRRISGSTQLLGLIGDPVAHSLSPAMHNAALAAMGEDYCYVPFPVAAERLAVAVAGLAAIGVRGFNVTIPHKQAILPLLSQVEARAAAVGAVNTVYALPEGGWGGTNTDIDGFVQPLLGLEKGIPTLILGSGGAARAAIQGCLELGLGPVRVAGRSPEKLRALQQTWPQVETLSWAELDRHLAETRLLVNTTPVGMHKPGSLAELSPLSWEQLRLLPAGATVYDLVYVPDPTPLLRMAAELGHTPIGGLEMLIHQGAKALSLWLGGKLVPVEVMRQAARQQLAQIGDPNS</sequence>
<accession>Q2JRC6</accession>
<comment type="function">
    <text evidence="1">Involved in the biosynthesis of the chorismate, which leads to the biosynthesis of aromatic amino acids. Catalyzes the reversible NADPH linked reduction of 3-dehydroshikimate (DHSA) to yield shikimate (SA).</text>
</comment>
<comment type="catalytic activity">
    <reaction evidence="1">
        <text>shikimate + NADP(+) = 3-dehydroshikimate + NADPH + H(+)</text>
        <dbReference type="Rhea" id="RHEA:17737"/>
        <dbReference type="ChEBI" id="CHEBI:15378"/>
        <dbReference type="ChEBI" id="CHEBI:16630"/>
        <dbReference type="ChEBI" id="CHEBI:36208"/>
        <dbReference type="ChEBI" id="CHEBI:57783"/>
        <dbReference type="ChEBI" id="CHEBI:58349"/>
        <dbReference type="EC" id="1.1.1.25"/>
    </reaction>
</comment>
<comment type="pathway">
    <text evidence="1">Metabolic intermediate biosynthesis; chorismate biosynthesis; chorismate from D-erythrose 4-phosphate and phosphoenolpyruvate: step 4/7.</text>
</comment>
<comment type="subunit">
    <text evidence="1">Homodimer.</text>
</comment>
<comment type="similarity">
    <text evidence="1">Belongs to the shikimate dehydrogenase family.</text>
</comment>
<dbReference type="EC" id="1.1.1.25" evidence="1"/>
<dbReference type="EMBL" id="CP000239">
    <property type="protein sequence ID" value="ABD00833.1"/>
    <property type="molecule type" value="Genomic_DNA"/>
</dbReference>
<dbReference type="RefSeq" id="WP_011431504.1">
    <property type="nucleotide sequence ID" value="NC_007775.1"/>
</dbReference>
<dbReference type="SMR" id="Q2JRC6"/>
<dbReference type="STRING" id="321327.CYA_2729"/>
<dbReference type="KEGG" id="cya:CYA_2729"/>
<dbReference type="eggNOG" id="COG0169">
    <property type="taxonomic scope" value="Bacteria"/>
</dbReference>
<dbReference type="HOGENOM" id="CLU_044063_0_1_3"/>
<dbReference type="OrthoDB" id="9792692at2"/>
<dbReference type="UniPathway" id="UPA00053">
    <property type="reaction ID" value="UER00087"/>
</dbReference>
<dbReference type="Proteomes" id="UP000008818">
    <property type="component" value="Chromosome"/>
</dbReference>
<dbReference type="GO" id="GO:0005829">
    <property type="term" value="C:cytosol"/>
    <property type="evidence" value="ECO:0007669"/>
    <property type="project" value="TreeGrafter"/>
</dbReference>
<dbReference type="GO" id="GO:0050661">
    <property type="term" value="F:NADP binding"/>
    <property type="evidence" value="ECO:0007669"/>
    <property type="project" value="TreeGrafter"/>
</dbReference>
<dbReference type="GO" id="GO:0004764">
    <property type="term" value="F:shikimate 3-dehydrogenase (NADP+) activity"/>
    <property type="evidence" value="ECO:0007669"/>
    <property type="project" value="UniProtKB-UniRule"/>
</dbReference>
<dbReference type="GO" id="GO:0008652">
    <property type="term" value="P:amino acid biosynthetic process"/>
    <property type="evidence" value="ECO:0007669"/>
    <property type="project" value="UniProtKB-KW"/>
</dbReference>
<dbReference type="GO" id="GO:0009073">
    <property type="term" value="P:aromatic amino acid family biosynthetic process"/>
    <property type="evidence" value="ECO:0007669"/>
    <property type="project" value="UniProtKB-KW"/>
</dbReference>
<dbReference type="GO" id="GO:0009423">
    <property type="term" value="P:chorismate biosynthetic process"/>
    <property type="evidence" value="ECO:0007669"/>
    <property type="project" value="UniProtKB-UniRule"/>
</dbReference>
<dbReference type="GO" id="GO:0019632">
    <property type="term" value="P:shikimate metabolic process"/>
    <property type="evidence" value="ECO:0007669"/>
    <property type="project" value="TreeGrafter"/>
</dbReference>
<dbReference type="CDD" id="cd01065">
    <property type="entry name" value="NAD_bind_Shikimate_DH"/>
    <property type="match status" value="1"/>
</dbReference>
<dbReference type="Gene3D" id="3.40.50.10860">
    <property type="entry name" value="Leucine Dehydrogenase, chain A, domain 1"/>
    <property type="match status" value="1"/>
</dbReference>
<dbReference type="Gene3D" id="3.40.50.720">
    <property type="entry name" value="NAD(P)-binding Rossmann-like Domain"/>
    <property type="match status" value="1"/>
</dbReference>
<dbReference type="HAMAP" id="MF_00222">
    <property type="entry name" value="Shikimate_DH_AroE"/>
    <property type="match status" value="1"/>
</dbReference>
<dbReference type="InterPro" id="IPR046346">
    <property type="entry name" value="Aminoacid_DH-like_N_sf"/>
</dbReference>
<dbReference type="InterPro" id="IPR036291">
    <property type="entry name" value="NAD(P)-bd_dom_sf"/>
</dbReference>
<dbReference type="InterPro" id="IPR041121">
    <property type="entry name" value="SDH_C"/>
</dbReference>
<dbReference type="InterPro" id="IPR013708">
    <property type="entry name" value="Shikimate_DH-bd_N"/>
</dbReference>
<dbReference type="InterPro" id="IPR022893">
    <property type="entry name" value="Shikimate_DH_fam"/>
</dbReference>
<dbReference type="NCBIfam" id="NF001314">
    <property type="entry name" value="PRK00258.2-2"/>
    <property type="match status" value="1"/>
</dbReference>
<dbReference type="PANTHER" id="PTHR21089:SF1">
    <property type="entry name" value="BIFUNCTIONAL 3-DEHYDROQUINATE DEHYDRATASE_SHIKIMATE DEHYDROGENASE, CHLOROPLASTIC"/>
    <property type="match status" value="1"/>
</dbReference>
<dbReference type="PANTHER" id="PTHR21089">
    <property type="entry name" value="SHIKIMATE DEHYDROGENASE"/>
    <property type="match status" value="1"/>
</dbReference>
<dbReference type="Pfam" id="PF18317">
    <property type="entry name" value="SDH_C"/>
    <property type="match status" value="1"/>
</dbReference>
<dbReference type="Pfam" id="PF08501">
    <property type="entry name" value="Shikimate_dh_N"/>
    <property type="match status" value="1"/>
</dbReference>
<dbReference type="SUPFAM" id="SSF53223">
    <property type="entry name" value="Aminoacid dehydrogenase-like, N-terminal domain"/>
    <property type="match status" value="1"/>
</dbReference>
<dbReference type="SUPFAM" id="SSF51735">
    <property type="entry name" value="NAD(P)-binding Rossmann-fold domains"/>
    <property type="match status" value="1"/>
</dbReference>
<feature type="chain" id="PRO_0000325176" description="Shikimate dehydrogenase (NADP(+))">
    <location>
        <begin position="1"/>
        <end position="291"/>
    </location>
</feature>
<feature type="active site" description="Proton acceptor" evidence="1">
    <location>
        <position position="73"/>
    </location>
</feature>
<feature type="binding site" evidence="1">
    <location>
        <begin position="22"/>
        <end position="24"/>
    </location>
    <ligand>
        <name>shikimate</name>
        <dbReference type="ChEBI" id="CHEBI:36208"/>
    </ligand>
</feature>
<feature type="binding site" evidence="1">
    <location>
        <position position="69"/>
    </location>
    <ligand>
        <name>shikimate</name>
        <dbReference type="ChEBI" id="CHEBI:36208"/>
    </ligand>
</feature>
<feature type="binding site" evidence="1">
    <location>
        <position position="94"/>
    </location>
    <ligand>
        <name>shikimate</name>
        <dbReference type="ChEBI" id="CHEBI:36208"/>
    </ligand>
</feature>
<feature type="binding site" evidence="1">
    <location>
        <position position="110"/>
    </location>
    <ligand>
        <name>shikimate</name>
        <dbReference type="ChEBI" id="CHEBI:36208"/>
    </ligand>
</feature>
<feature type="binding site" evidence="1">
    <location>
        <begin position="131"/>
        <end position="135"/>
    </location>
    <ligand>
        <name>NADP(+)</name>
        <dbReference type="ChEBI" id="CHEBI:58349"/>
    </ligand>
</feature>
<feature type="binding site" evidence="1">
    <location>
        <position position="226"/>
    </location>
    <ligand>
        <name>NADP(+)</name>
        <dbReference type="ChEBI" id="CHEBI:58349"/>
    </ligand>
</feature>
<feature type="binding site" evidence="1">
    <location>
        <position position="228"/>
    </location>
    <ligand>
        <name>shikimate</name>
        <dbReference type="ChEBI" id="CHEBI:36208"/>
    </ligand>
</feature>
<feature type="binding site" evidence="1">
    <location>
        <position position="249"/>
    </location>
    <ligand>
        <name>NADP(+)</name>
        <dbReference type="ChEBI" id="CHEBI:58349"/>
    </ligand>
</feature>
<organism>
    <name type="scientific">Synechococcus sp. (strain JA-3-3Ab)</name>
    <name type="common">Cyanobacteria bacterium Yellowstone A-Prime</name>
    <dbReference type="NCBI Taxonomy" id="321327"/>
    <lineage>
        <taxon>Bacteria</taxon>
        <taxon>Bacillati</taxon>
        <taxon>Cyanobacteriota</taxon>
        <taxon>Cyanophyceae</taxon>
        <taxon>Synechococcales</taxon>
        <taxon>Synechococcaceae</taxon>
        <taxon>Synechococcus</taxon>
    </lineage>
</organism>
<reference key="1">
    <citation type="journal article" date="2007" name="ISME J.">
        <title>Population level functional diversity in a microbial community revealed by comparative genomic and metagenomic analyses.</title>
        <authorList>
            <person name="Bhaya D."/>
            <person name="Grossman A.R."/>
            <person name="Steunou A.-S."/>
            <person name="Khuri N."/>
            <person name="Cohan F.M."/>
            <person name="Hamamura N."/>
            <person name="Melendrez M.C."/>
            <person name="Bateson M.M."/>
            <person name="Ward D.M."/>
            <person name="Heidelberg J.F."/>
        </authorList>
    </citation>
    <scope>NUCLEOTIDE SEQUENCE [LARGE SCALE GENOMIC DNA]</scope>
    <source>
        <strain>JA-3-3Ab</strain>
    </source>
</reference>
<keyword id="KW-0028">Amino-acid biosynthesis</keyword>
<keyword id="KW-0057">Aromatic amino acid biosynthesis</keyword>
<keyword id="KW-0521">NADP</keyword>
<keyword id="KW-0560">Oxidoreductase</keyword>
<protein>
    <recommendedName>
        <fullName evidence="1">Shikimate dehydrogenase (NADP(+))</fullName>
        <shortName evidence="1">SDH</shortName>
        <ecNumber evidence="1">1.1.1.25</ecNumber>
    </recommendedName>
</protein>
<evidence type="ECO:0000255" key="1">
    <source>
        <dbReference type="HAMAP-Rule" id="MF_00222"/>
    </source>
</evidence>
<name>AROE_SYNJA</name>